<proteinExistence type="inferred from homology"/>
<gene>
    <name evidence="1" type="primary">yciB</name>
    <name type="ordered locus">ASA_0822</name>
</gene>
<organism>
    <name type="scientific">Aeromonas salmonicida (strain A449)</name>
    <dbReference type="NCBI Taxonomy" id="382245"/>
    <lineage>
        <taxon>Bacteria</taxon>
        <taxon>Pseudomonadati</taxon>
        <taxon>Pseudomonadota</taxon>
        <taxon>Gammaproteobacteria</taxon>
        <taxon>Aeromonadales</taxon>
        <taxon>Aeromonadaceae</taxon>
        <taxon>Aeromonas</taxon>
    </lineage>
</organism>
<dbReference type="EMBL" id="CP000644">
    <property type="protein sequence ID" value="ABO88971.1"/>
    <property type="molecule type" value="Genomic_DNA"/>
</dbReference>
<dbReference type="RefSeq" id="WP_005318063.1">
    <property type="nucleotide sequence ID" value="NC_009348.1"/>
</dbReference>
<dbReference type="STRING" id="29491.GCA_000820065_03832"/>
<dbReference type="KEGG" id="asa:ASA_0822"/>
<dbReference type="eggNOG" id="COG2917">
    <property type="taxonomic scope" value="Bacteria"/>
</dbReference>
<dbReference type="HOGENOM" id="CLU_089554_2_0_6"/>
<dbReference type="Proteomes" id="UP000000225">
    <property type="component" value="Chromosome"/>
</dbReference>
<dbReference type="GO" id="GO:0005886">
    <property type="term" value="C:plasma membrane"/>
    <property type="evidence" value="ECO:0007669"/>
    <property type="project" value="UniProtKB-SubCell"/>
</dbReference>
<dbReference type="HAMAP" id="MF_00189">
    <property type="entry name" value="YciB"/>
    <property type="match status" value="1"/>
</dbReference>
<dbReference type="InterPro" id="IPR006008">
    <property type="entry name" value="YciB"/>
</dbReference>
<dbReference type="NCBIfam" id="TIGR00997">
    <property type="entry name" value="ispZ"/>
    <property type="match status" value="1"/>
</dbReference>
<dbReference type="NCBIfam" id="NF001324">
    <property type="entry name" value="PRK00259.1-2"/>
    <property type="match status" value="1"/>
</dbReference>
<dbReference type="NCBIfam" id="NF001325">
    <property type="entry name" value="PRK00259.1-3"/>
    <property type="match status" value="1"/>
</dbReference>
<dbReference type="PANTHER" id="PTHR36917:SF1">
    <property type="entry name" value="INNER MEMBRANE-SPANNING PROTEIN YCIB"/>
    <property type="match status" value="1"/>
</dbReference>
<dbReference type="PANTHER" id="PTHR36917">
    <property type="entry name" value="INTRACELLULAR SEPTATION PROTEIN A-RELATED"/>
    <property type="match status" value="1"/>
</dbReference>
<dbReference type="Pfam" id="PF04279">
    <property type="entry name" value="IspA"/>
    <property type="match status" value="1"/>
</dbReference>
<protein>
    <recommendedName>
        <fullName evidence="1">Inner membrane-spanning protein YciB</fullName>
    </recommendedName>
</protein>
<sequence length="183" mass="21210">MKQFIEFIPLIVFFAVYKFYDIYTATGALVVVTGLQLIYSWVRYRKVEKMQLFTFLLVGFFGGLTVFFHDDAFIKWKVTVINILFALGLLISRYGFGKNLIKQMLAKELQAPDAIWDRVNLAWVGFFTVCGLLNLYVAFNLPQEMWVNFKVFGLLGMTLVFTLLSGVYLYRHLPAEQKGELKK</sequence>
<accession>A4SJ99</accession>
<keyword id="KW-0997">Cell inner membrane</keyword>
<keyword id="KW-1003">Cell membrane</keyword>
<keyword id="KW-0472">Membrane</keyword>
<keyword id="KW-0812">Transmembrane</keyword>
<keyword id="KW-1133">Transmembrane helix</keyword>
<reference key="1">
    <citation type="journal article" date="2008" name="BMC Genomics">
        <title>The genome of Aeromonas salmonicida subsp. salmonicida A449: insights into the evolution of a fish pathogen.</title>
        <authorList>
            <person name="Reith M.E."/>
            <person name="Singh R.K."/>
            <person name="Curtis B."/>
            <person name="Boyd J.M."/>
            <person name="Bouevitch A."/>
            <person name="Kimball J."/>
            <person name="Munholland J."/>
            <person name="Murphy C."/>
            <person name="Sarty D."/>
            <person name="Williams J."/>
            <person name="Nash J.H."/>
            <person name="Johnson S.C."/>
            <person name="Brown L.L."/>
        </authorList>
    </citation>
    <scope>NUCLEOTIDE SEQUENCE [LARGE SCALE GENOMIC DNA]</scope>
    <source>
        <strain>A449</strain>
    </source>
</reference>
<feature type="chain" id="PRO_1000020981" description="Inner membrane-spanning protein YciB">
    <location>
        <begin position="1"/>
        <end position="183"/>
    </location>
</feature>
<feature type="transmembrane region" description="Helical" evidence="1">
    <location>
        <begin position="22"/>
        <end position="44"/>
    </location>
</feature>
<feature type="transmembrane region" description="Helical" evidence="1">
    <location>
        <begin position="54"/>
        <end position="74"/>
    </location>
</feature>
<feature type="transmembrane region" description="Helical" evidence="1">
    <location>
        <begin position="76"/>
        <end position="96"/>
    </location>
</feature>
<feature type="transmembrane region" description="Helical" evidence="1">
    <location>
        <begin position="119"/>
        <end position="139"/>
    </location>
</feature>
<feature type="transmembrane region" description="Helical" evidence="1">
    <location>
        <begin position="149"/>
        <end position="169"/>
    </location>
</feature>
<comment type="function">
    <text evidence="1">Plays a role in cell envelope biogenesis, maintenance of cell envelope integrity and membrane homeostasis.</text>
</comment>
<comment type="subcellular location">
    <subcellularLocation>
        <location evidence="1">Cell inner membrane</location>
        <topology evidence="1">Multi-pass membrane protein</topology>
    </subcellularLocation>
</comment>
<comment type="similarity">
    <text evidence="1">Belongs to the YciB family.</text>
</comment>
<name>YCIB_AERS4</name>
<evidence type="ECO:0000255" key="1">
    <source>
        <dbReference type="HAMAP-Rule" id="MF_00189"/>
    </source>
</evidence>